<sequence>MQVTVETLEGLQRRLNITVPAANIEDAVAAELRNIAKNRRFDGFRKGKVPMKMVAKMYGKAVRQDVLGEVMQRHFIEAIVKEKINPAGAPTFAPVEIGEGKDLVFTATFEVYPEVELKGLENIAVEKPAAEVTDADVAEMLETLRKQQATWKEVDEAAENGKRVSIDFVGSIDGVEFEGGKAENFPLEMGAGRMIPGFEDGIVGKTKGMEFVIDVTFPEDYHAENLKGKAAKFAIKVNKVEARELPELNDEFVARFGVAEGGVDALKAEVRKNMERELKQAIKARIKEQAIEGLVKENEIQVPSALIDQEINVLRQQAAQRFGGNVEAAAQLPRELFEEQAKRRVVVGLLLGEVIRTHELKADEEKVKALITEMATAYEDPSEVVSYYEQNQQLMNNMRNVALEEQAVDAIIAKAKVTEKAISFSELMNPVAA</sequence>
<proteinExistence type="inferred from homology"/>
<keyword id="KW-0131">Cell cycle</keyword>
<keyword id="KW-0132">Cell division</keyword>
<keyword id="KW-0143">Chaperone</keyword>
<keyword id="KW-0963">Cytoplasm</keyword>
<keyword id="KW-0413">Isomerase</keyword>
<keyword id="KW-0697">Rotamase</keyword>
<accession>A5F6X1</accession>
<accession>C3M1X6</accession>
<organism>
    <name type="scientific">Vibrio cholerae serotype O1 (strain ATCC 39541 / Classical Ogawa 395 / O395)</name>
    <dbReference type="NCBI Taxonomy" id="345073"/>
    <lineage>
        <taxon>Bacteria</taxon>
        <taxon>Pseudomonadati</taxon>
        <taxon>Pseudomonadota</taxon>
        <taxon>Gammaproteobacteria</taxon>
        <taxon>Vibrionales</taxon>
        <taxon>Vibrionaceae</taxon>
        <taxon>Vibrio</taxon>
    </lineage>
</organism>
<gene>
    <name evidence="1" type="primary">tig</name>
    <name type="ordered locus">VC0395_A1513</name>
    <name type="ordered locus">VC395_2038</name>
</gene>
<protein>
    <recommendedName>
        <fullName evidence="1">Trigger factor</fullName>
        <shortName evidence="1">TF</shortName>
        <ecNumber evidence="1">5.2.1.8</ecNumber>
    </recommendedName>
    <alternativeName>
        <fullName evidence="1">PPIase</fullName>
    </alternativeName>
</protein>
<feature type="chain" id="PRO_1000071990" description="Trigger factor">
    <location>
        <begin position="1"/>
        <end position="433"/>
    </location>
</feature>
<feature type="domain" description="PPIase FKBP-type" evidence="1">
    <location>
        <begin position="161"/>
        <end position="246"/>
    </location>
</feature>
<dbReference type="EC" id="5.2.1.8" evidence="1"/>
<dbReference type="EMBL" id="CP000627">
    <property type="protein sequence ID" value="ABQ19501.1"/>
    <property type="molecule type" value="Genomic_DNA"/>
</dbReference>
<dbReference type="EMBL" id="CP001235">
    <property type="protein sequence ID" value="ACP10031.1"/>
    <property type="molecule type" value="Genomic_DNA"/>
</dbReference>
<dbReference type="RefSeq" id="WP_001198446.1">
    <property type="nucleotide sequence ID" value="NZ_JAACZH010000001.1"/>
</dbReference>
<dbReference type="SMR" id="A5F6X1"/>
<dbReference type="KEGG" id="vco:VC0395_A1513"/>
<dbReference type="KEGG" id="vcr:VC395_2038"/>
<dbReference type="PATRIC" id="fig|345073.21.peg.1972"/>
<dbReference type="eggNOG" id="COG0544">
    <property type="taxonomic scope" value="Bacteria"/>
</dbReference>
<dbReference type="HOGENOM" id="CLU_033058_2_0_6"/>
<dbReference type="OrthoDB" id="9767721at2"/>
<dbReference type="Proteomes" id="UP000000249">
    <property type="component" value="Chromosome 2"/>
</dbReference>
<dbReference type="GO" id="GO:0005737">
    <property type="term" value="C:cytoplasm"/>
    <property type="evidence" value="ECO:0007669"/>
    <property type="project" value="UniProtKB-SubCell"/>
</dbReference>
<dbReference type="GO" id="GO:0003755">
    <property type="term" value="F:peptidyl-prolyl cis-trans isomerase activity"/>
    <property type="evidence" value="ECO:0007669"/>
    <property type="project" value="UniProtKB-UniRule"/>
</dbReference>
<dbReference type="GO" id="GO:0044183">
    <property type="term" value="F:protein folding chaperone"/>
    <property type="evidence" value="ECO:0007669"/>
    <property type="project" value="TreeGrafter"/>
</dbReference>
<dbReference type="GO" id="GO:0043022">
    <property type="term" value="F:ribosome binding"/>
    <property type="evidence" value="ECO:0007669"/>
    <property type="project" value="TreeGrafter"/>
</dbReference>
<dbReference type="GO" id="GO:0051083">
    <property type="term" value="P:'de novo' cotranslational protein folding"/>
    <property type="evidence" value="ECO:0007669"/>
    <property type="project" value="TreeGrafter"/>
</dbReference>
<dbReference type="GO" id="GO:0051301">
    <property type="term" value="P:cell division"/>
    <property type="evidence" value="ECO:0007669"/>
    <property type="project" value="UniProtKB-KW"/>
</dbReference>
<dbReference type="GO" id="GO:0061077">
    <property type="term" value="P:chaperone-mediated protein folding"/>
    <property type="evidence" value="ECO:0007669"/>
    <property type="project" value="TreeGrafter"/>
</dbReference>
<dbReference type="GO" id="GO:0015031">
    <property type="term" value="P:protein transport"/>
    <property type="evidence" value="ECO:0007669"/>
    <property type="project" value="UniProtKB-UniRule"/>
</dbReference>
<dbReference type="GO" id="GO:0043335">
    <property type="term" value="P:protein unfolding"/>
    <property type="evidence" value="ECO:0007669"/>
    <property type="project" value="TreeGrafter"/>
</dbReference>
<dbReference type="FunFam" id="3.10.50.40:FF:000001">
    <property type="entry name" value="Trigger factor"/>
    <property type="match status" value="1"/>
</dbReference>
<dbReference type="FunFam" id="3.30.70.1050:FF:000001">
    <property type="entry name" value="Trigger factor"/>
    <property type="match status" value="1"/>
</dbReference>
<dbReference type="Gene3D" id="3.10.50.40">
    <property type="match status" value="1"/>
</dbReference>
<dbReference type="Gene3D" id="3.30.70.1050">
    <property type="entry name" value="Trigger factor ribosome-binding domain"/>
    <property type="match status" value="1"/>
</dbReference>
<dbReference type="Gene3D" id="1.10.3120.10">
    <property type="entry name" value="Trigger factor, C-terminal domain"/>
    <property type="match status" value="1"/>
</dbReference>
<dbReference type="HAMAP" id="MF_00303">
    <property type="entry name" value="Trigger_factor_Tig"/>
    <property type="match status" value="1"/>
</dbReference>
<dbReference type="InterPro" id="IPR046357">
    <property type="entry name" value="PPIase_dom_sf"/>
</dbReference>
<dbReference type="InterPro" id="IPR001179">
    <property type="entry name" value="PPIase_FKBP_dom"/>
</dbReference>
<dbReference type="InterPro" id="IPR005215">
    <property type="entry name" value="Trig_fac"/>
</dbReference>
<dbReference type="InterPro" id="IPR008880">
    <property type="entry name" value="Trigger_fac_C"/>
</dbReference>
<dbReference type="InterPro" id="IPR037041">
    <property type="entry name" value="Trigger_fac_C_sf"/>
</dbReference>
<dbReference type="InterPro" id="IPR008881">
    <property type="entry name" value="Trigger_fac_ribosome-bd_bac"/>
</dbReference>
<dbReference type="InterPro" id="IPR036611">
    <property type="entry name" value="Trigger_fac_ribosome-bd_sf"/>
</dbReference>
<dbReference type="InterPro" id="IPR027304">
    <property type="entry name" value="Trigger_fact/SurA_dom_sf"/>
</dbReference>
<dbReference type="NCBIfam" id="TIGR00115">
    <property type="entry name" value="tig"/>
    <property type="match status" value="1"/>
</dbReference>
<dbReference type="PANTHER" id="PTHR30560">
    <property type="entry name" value="TRIGGER FACTOR CHAPERONE AND PEPTIDYL-PROLYL CIS/TRANS ISOMERASE"/>
    <property type="match status" value="1"/>
</dbReference>
<dbReference type="PANTHER" id="PTHR30560:SF3">
    <property type="entry name" value="TRIGGER FACTOR-LIKE PROTEIN TIG, CHLOROPLASTIC"/>
    <property type="match status" value="1"/>
</dbReference>
<dbReference type="Pfam" id="PF00254">
    <property type="entry name" value="FKBP_C"/>
    <property type="match status" value="1"/>
</dbReference>
<dbReference type="Pfam" id="PF05698">
    <property type="entry name" value="Trigger_C"/>
    <property type="match status" value="1"/>
</dbReference>
<dbReference type="Pfam" id="PF05697">
    <property type="entry name" value="Trigger_N"/>
    <property type="match status" value="1"/>
</dbReference>
<dbReference type="PIRSF" id="PIRSF003095">
    <property type="entry name" value="Trigger_factor"/>
    <property type="match status" value="1"/>
</dbReference>
<dbReference type="SUPFAM" id="SSF54534">
    <property type="entry name" value="FKBP-like"/>
    <property type="match status" value="1"/>
</dbReference>
<dbReference type="SUPFAM" id="SSF109998">
    <property type="entry name" value="Triger factor/SurA peptide-binding domain-like"/>
    <property type="match status" value="1"/>
</dbReference>
<dbReference type="SUPFAM" id="SSF102735">
    <property type="entry name" value="Trigger factor ribosome-binding domain"/>
    <property type="match status" value="1"/>
</dbReference>
<dbReference type="PROSITE" id="PS50059">
    <property type="entry name" value="FKBP_PPIASE"/>
    <property type="match status" value="1"/>
</dbReference>
<comment type="function">
    <text evidence="1">Involved in protein export. Acts as a chaperone by maintaining the newly synthesized protein in an open conformation. Functions as a peptidyl-prolyl cis-trans isomerase.</text>
</comment>
<comment type="catalytic activity">
    <reaction evidence="1">
        <text>[protein]-peptidylproline (omega=180) = [protein]-peptidylproline (omega=0)</text>
        <dbReference type="Rhea" id="RHEA:16237"/>
        <dbReference type="Rhea" id="RHEA-COMP:10747"/>
        <dbReference type="Rhea" id="RHEA-COMP:10748"/>
        <dbReference type="ChEBI" id="CHEBI:83833"/>
        <dbReference type="ChEBI" id="CHEBI:83834"/>
        <dbReference type="EC" id="5.2.1.8"/>
    </reaction>
</comment>
<comment type="subcellular location">
    <subcellularLocation>
        <location>Cytoplasm</location>
    </subcellularLocation>
    <text evidence="1">About half TF is bound to the ribosome near the polypeptide exit tunnel while the other half is free in the cytoplasm.</text>
</comment>
<comment type="domain">
    <text evidence="1">Consists of 3 domains; the N-terminus binds the ribosome, the middle domain has PPIase activity, while the C-terminus has intrinsic chaperone activity on its own.</text>
</comment>
<comment type="similarity">
    <text evidence="1">Belongs to the FKBP-type PPIase family. Tig subfamily.</text>
</comment>
<evidence type="ECO:0000255" key="1">
    <source>
        <dbReference type="HAMAP-Rule" id="MF_00303"/>
    </source>
</evidence>
<reference key="1">
    <citation type="submission" date="2007-03" db="EMBL/GenBank/DDBJ databases">
        <authorList>
            <person name="Heidelberg J."/>
        </authorList>
    </citation>
    <scope>NUCLEOTIDE SEQUENCE [LARGE SCALE GENOMIC DNA]</scope>
    <source>
        <strain>ATCC 39541 / Classical Ogawa 395 / O395</strain>
    </source>
</reference>
<reference key="2">
    <citation type="journal article" date="2008" name="PLoS ONE">
        <title>A recalibrated molecular clock and independent origins for the cholera pandemic clones.</title>
        <authorList>
            <person name="Feng L."/>
            <person name="Reeves P.R."/>
            <person name="Lan R."/>
            <person name="Ren Y."/>
            <person name="Gao C."/>
            <person name="Zhou Z."/>
            <person name="Ren Y."/>
            <person name="Cheng J."/>
            <person name="Wang W."/>
            <person name="Wang J."/>
            <person name="Qian W."/>
            <person name="Li D."/>
            <person name="Wang L."/>
        </authorList>
    </citation>
    <scope>NUCLEOTIDE SEQUENCE [LARGE SCALE GENOMIC DNA]</scope>
    <source>
        <strain>ATCC 39541 / Classical Ogawa 395 / O395</strain>
    </source>
</reference>
<name>TIG_VIBC3</name>